<keyword id="KW-0002">3D-structure</keyword>
<keyword id="KW-0025">Alternative splicing</keyword>
<keyword id="KW-0067">ATP-binding</keyword>
<keyword id="KW-0227">DNA damage</keyword>
<keyword id="KW-0234">DNA repair</keyword>
<keyword id="KW-0347">Helicase</keyword>
<keyword id="KW-0378">Hydrolase</keyword>
<keyword id="KW-0479">Metal-binding</keyword>
<keyword id="KW-0547">Nucleotide-binding</keyword>
<keyword id="KW-0597">Phosphoprotein</keyword>
<keyword id="KW-1267">Proteomics identification</keyword>
<keyword id="KW-1185">Reference proteome</keyword>
<keyword id="KW-0808">Transferase</keyword>
<keyword id="KW-0833">Ubl conjugation pathway</keyword>
<keyword id="KW-0862">Zinc</keyword>
<keyword id="KW-0863">Zinc-finger</keyword>
<gene>
    <name type="primary">SHPRH</name>
    <name type="synonym">KIAA2023</name>
</gene>
<feature type="chain" id="PRO_0000284918" description="E3 ubiquitin-protein ligase SHPRH">
    <location>
        <begin position="1"/>
        <end position="1683"/>
    </location>
</feature>
<feature type="domain" description="Helicase ATP-binding; first part" evidence="3">
    <location>
        <begin position="307"/>
        <end position="389"/>
    </location>
</feature>
<feature type="domain" description="H15" evidence="5">
    <location>
        <begin position="438"/>
        <end position="512"/>
    </location>
</feature>
<feature type="domain" description="Helicase ATP-binding; second part" evidence="3">
    <location>
        <begin position="710"/>
        <end position="868"/>
    </location>
</feature>
<feature type="domain" description="Helicase C-terminal" evidence="4">
    <location>
        <begin position="1514"/>
        <end position="1672"/>
    </location>
</feature>
<feature type="zinc finger region" description="PHD-type">
    <location>
        <begin position="658"/>
        <end position="709"/>
    </location>
</feature>
<feature type="zinc finger region" description="RING-type" evidence="2">
    <location>
        <begin position="1432"/>
        <end position="1479"/>
    </location>
</feature>
<feature type="region of interest" description="Disordered" evidence="6">
    <location>
        <begin position="1"/>
        <end position="43"/>
    </location>
</feature>
<feature type="region of interest" description="Disordered" evidence="6">
    <location>
        <begin position="525"/>
        <end position="607"/>
    </location>
</feature>
<feature type="short sequence motif" description="DEAQ box">
    <location>
        <begin position="819"/>
        <end position="822"/>
    </location>
</feature>
<feature type="compositionally biased region" description="Basic and acidic residues" evidence="6">
    <location>
        <begin position="12"/>
        <end position="32"/>
    </location>
</feature>
<feature type="compositionally biased region" description="Basic and acidic residues" evidence="6">
    <location>
        <begin position="534"/>
        <end position="547"/>
    </location>
</feature>
<feature type="compositionally biased region" description="Basic residues" evidence="6">
    <location>
        <begin position="568"/>
        <end position="588"/>
    </location>
</feature>
<feature type="binding site" evidence="3">
    <location>
        <begin position="373"/>
        <end position="380"/>
    </location>
    <ligand>
        <name>ATP</name>
        <dbReference type="ChEBI" id="CHEBI:30616"/>
    </ligand>
</feature>
<feature type="modified residue" description="Phosphoserine" evidence="17">
    <location>
        <position position="266"/>
    </location>
</feature>
<feature type="modified residue" description="Phosphoserine" evidence="1">
    <location>
        <position position="635"/>
    </location>
</feature>
<feature type="splice variant" id="VSP_024753" description="In isoform 2." evidence="13">
    <location>
        <begin position="46"/>
        <end position="156"/>
    </location>
</feature>
<feature type="splice variant" id="VSP_024760" description="In isoform 4." evidence="15">
    <original>TRVMILTAVKEMNGKKGVSILSIYKYVSSI</original>
    <variation>YPFTFSYTCDDTDSCERNEWKKRSVHPFHL</variation>
    <location>
        <begin position="442"/>
        <end position="471"/>
    </location>
</feature>
<feature type="splice variant" id="VSP_024761" description="In isoform 4." evidence="15">
    <location>
        <begin position="472"/>
        <end position="1683"/>
    </location>
</feature>
<feature type="splice variant" id="VSP_024756" description="In isoform 3." evidence="14">
    <original>K</original>
    <variation>KSFEQSTFSF</variation>
    <location>
        <position position="996"/>
    </location>
</feature>
<feature type="splice variant" id="VSP_024757" description="In isoform 2." evidence="13">
    <original>EY</original>
    <variation>RR</variation>
    <location>
        <begin position="1039"/>
        <end position="1040"/>
    </location>
</feature>
<feature type="splice variant" id="VSP_024758" description="In isoform 2." evidence="13">
    <location>
        <begin position="1041"/>
        <end position="1683"/>
    </location>
</feature>
<feature type="splice variant" id="VSP_024759" description="In isoform 3." evidence="14">
    <location>
        <begin position="1183"/>
        <end position="1187"/>
    </location>
</feature>
<feature type="splice variant" id="VSP_024762" description="In isoform 3." evidence="14">
    <original>HTN</original>
    <variation>IYI</variation>
    <location>
        <begin position="1653"/>
        <end position="1655"/>
    </location>
</feature>
<feature type="splice variant" id="VSP_024763" description="In isoform 3." evidence="14">
    <location>
        <begin position="1656"/>
        <end position="1683"/>
    </location>
</feature>
<feature type="sequence variant" id="VAR_090436" description="Found in a patient with autosomal recessive hearing loss; uncertain significance." evidence="12">
    <original>E</original>
    <variation>A</variation>
    <location>
        <position position="267"/>
    </location>
</feature>
<feature type="sequence variant" id="VAR_031857" description="In an ovarian cancer cell line; dbSNP:rs1411096648." evidence="7">
    <original>Q</original>
    <variation>R</variation>
    <location>
        <position position="438"/>
    </location>
</feature>
<feature type="sequence variant" id="VAR_031858" description="In a melanoma cell line." evidence="7">
    <original>S</original>
    <variation>F</variation>
    <location>
        <position position="460"/>
    </location>
</feature>
<feature type="sequence variant" id="VAR_031859" description="In a melanoma cell line." evidence="7">
    <original>N</original>
    <variation>Y</variation>
    <location>
        <position position="1028"/>
    </location>
</feature>
<feature type="sequence variant" id="VAR_090437" description="Found in a patient with autosomal recessive hearing loss; uncertain significance." evidence="12">
    <original>I</original>
    <variation>T</variation>
    <location>
        <position position="1146"/>
    </location>
</feature>
<feature type="sequence variant" id="VAR_064750" description="Found in a renal cell carcinoma sample; somatic mutation." evidence="11">
    <original>V</original>
    <variation>D</variation>
    <location>
        <position position="1222"/>
    </location>
</feature>
<feature type="mutagenesis site" description="Abolishes E3 activity." evidence="9">
    <original>C</original>
    <variation>A</variation>
    <location>
        <position position="1432"/>
    </location>
</feature>
<feature type="sequence conflict" description="In Ref. 3; CAH18145." evidence="16" ref="3">
    <original>M</original>
    <variation>V</variation>
    <location>
        <position position="185"/>
    </location>
</feature>
<feature type="sequence conflict" description="In Ref. 6; BAC11544." evidence="16" ref="6">
    <original>K</original>
    <variation>E</variation>
    <location>
        <position position="379"/>
    </location>
</feature>
<feature type="sequence conflict" description="In Ref. 6; BAC11544." evidence="16" ref="6">
    <original>E</original>
    <variation>G</variation>
    <location>
        <position position="425"/>
    </location>
</feature>
<feature type="sequence conflict" description="In Ref. 3; CAH18145." evidence="16" ref="3">
    <original>D</original>
    <variation>G</variation>
    <location>
        <position position="560"/>
    </location>
</feature>
<feature type="sequence conflict" description="In Ref. 5; AAI17687." evidence="16" ref="5">
    <original>V</original>
    <variation>F</variation>
    <location>
        <position position="1398"/>
    </location>
</feature>
<feature type="turn" evidence="18">
    <location>
        <begin position="669"/>
        <end position="671"/>
    </location>
</feature>
<feature type="strand" evidence="18">
    <location>
        <begin position="674"/>
        <end position="677"/>
    </location>
</feature>
<feature type="turn" evidence="18">
    <location>
        <begin position="678"/>
        <end position="681"/>
    </location>
</feature>
<feature type="strand" evidence="18">
    <location>
        <begin position="682"/>
        <end position="685"/>
    </location>
</feature>
<feature type="helix" evidence="18">
    <location>
        <begin position="686"/>
        <end position="688"/>
    </location>
</feature>
<feature type="turn" evidence="18">
    <location>
        <begin position="694"/>
        <end position="698"/>
    </location>
</feature>
<feature type="helix" evidence="18">
    <location>
        <begin position="704"/>
        <end position="710"/>
    </location>
</feature>
<feature type="helix" evidence="19">
    <location>
        <begin position="1000"/>
        <end position="1037"/>
    </location>
</feature>
<feature type="helix" evidence="19">
    <location>
        <begin position="1040"/>
        <end position="1056"/>
    </location>
</feature>
<feature type="turn" evidence="19">
    <location>
        <begin position="1057"/>
        <end position="1060"/>
    </location>
</feature>
<feature type="helix" evidence="19">
    <location>
        <begin position="1065"/>
        <end position="1080"/>
    </location>
</feature>
<feature type="turn" evidence="19">
    <location>
        <begin position="1081"/>
        <end position="1084"/>
    </location>
</feature>
<feature type="turn" evidence="19">
    <location>
        <begin position="1090"/>
        <end position="1094"/>
    </location>
</feature>
<feature type="helix" evidence="19">
    <location>
        <begin position="1095"/>
        <end position="1119"/>
    </location>
</feature>
<feature type="helix" evidence="19">
    <location>
        <begin position="1122"/>
        <end position="1133"/>
    </location>
</feature>
<feature type="strand" evidence="19">
    <location>
        <begin position="1137"/>
        <end position="1139"/>
    </location>
</feature>
<feature type="helix" evidence="19">
    <location>
        <begin position="1141"/>
        <end position="1151"/>
    </location>
</feature>
<feature type="helix" evidence="19">
    <location>
        <begin position="1155"/>
        <end position="1166"/>
    </location>
</feature>
<feature type="helix" evidence="19">
    <location>
        <begin position="1180"/>
        <end position="1182"/>
    </location>
</feature>
<feature type="helix" evidence="19">
    <location>
        <begin position="1186"/>
        <end position="1212"/>
    </location>
</feature>
<feature type="helix" evidence="19">
    <location>
        <begin position="1220"/>
        <end position="1230"/>
    </location>
</feature>
<feature type="strand" evidence="19">
    <location>
        <begin position="1234"/>
        <end position="1236"/>
    </location>
</feature>
<feature type="helix" evidence="19">
    <location>
        <begin position="1242"/>
        <end position="1257"/>
    </location>
</feature>
<feature type="helix" evidence="19">
    <location>
        <begin position="1296"/>
        <end position="1310"/>
    </location>
</feature>
<feature type="helix" evidence="19">
    <location>
        <begin position="1315"/>
        <end position="1359"/>
    </location>
</feature>
<feature type="helix" evidence="19">
    <location>
        <begin position="1385"/>
        <end position="1414"/>
    </location>
</feature>
<accession>Q149N8</accession>
<accession>Q149N9</accession>
<accession>Q5VV79</accession>
<accession>Q68DS5</accession>
<accession>Q7Z5J5</accession>
<accession>Q8IVE8</accession>
<accession>Q8IWQ9</accession>
<accession>Q8N1S8</accession>
<accession>Q8NBR7</accession>
<name>SHPRH_HUMAN</name>
<dbReference type="EC" id="2.3.2.27"/>
<dbReference type="EC" id="3.6.4.-"/>
<dbReference type="EMBL" id="AY161136">
    <property type="protein sequence ID" value="AAO26201.1"/>
    <property type="molecule type" value="mRNA"/>
</dbReference>
<dbReference type="EMBL" id="AY163808">
    <property type="protein sequence ID" value="AAO06907.1"/>
    <property type="molecule type" value="mRNA"/>
</dbReference>
<dbReference type="EMBL" id="CR749290">
    <property type="protein sequence ID" value="CAH18145.1"/>
    <property type="status" value="ALT_FRAME"/>
    <property type="molecule type" value="mRNA"/>
</dbReference>
<dbReference type="EMBL" id="AL356599">
    <property type="status" value="NOT_ANNOTATED_CDS"/>
    <property type="molecule type" value="Genomic_DNA"/>
</dbReference>
<dbReference type="EMBL" id="AL451145">
    <property type="status" value="NOT_ANNOTATED_CDS"/>
    <property type="molecule type" value="Genomic_DNA"/>
</dbReference>
<dbReference type="EMBL" id="BC113089">
    <property type="protein sequence ID" value="AAI13090.1"/>
    <property type="status" value="ALT_SEQ"/>
    <property type="molecule type" value="mRNA"/>
</dbReference>
<dbReference type="EMBL" id="BC117685">
    <property type="protein sequence ID" value="AAI17686.1"/>
    <property type="status" value="ALT_SEQ"/>
    <property type="molecule type" value="mRNA"/>
</dbReference>
<dbReference type="EMBL" id="BC117686">
    <property type="protein sequence ID" value="AAI17687.1"/>
    <property type="molecule type" value="mRNA"/>
</dbReference>
<dbReference type="EMBL" id="AK075318">
    <property type="protein sequence ID" value="BAC11544.1"/>
    <property type="molecule type" value="mRNA"/>
</dbReference>
<dbReference type="EMBL" id="AK094944">
    <property type="protein sequence ID" value="BAC04459.1"/>
    <property type="status" value="ALT_INIT"/>
    <property type="molecule type" value="mRNA"/>
</dbReference>
<dbReference type="EMBL" id="AB095943">
    <property type="protein sequence ID" value="BAC23119.1"/>
    <property type="status" value="ALT_SEQ"/>
    <property type="molecule type" value="mRNA"/>
</dbReference>
<dbReference type="CCDS" id="CCDS43513.2">
    <molecule id="Q149N8-1"/>
</dbReference>
<dbReference type="CCDS" id="CCDS47496.1">
    <molecule id="Q149N8-4"/>
</dbReference>
<dbReference type="RefSeq" id="NP_001036148.2">
    <molecule id="Q149N8-1"/>
    <property type="nucleotide sequence ID" value="NM_001042683.3"/>
</dbReference>
<dbReference type="RefSeq" id="NP_001357256.1">
    <molecule id="Q149N8-1"/>
    <property type="nucleotide sequence ID" value="NM_001370327.1"/>
</dbReference>
<dbReference type="RefSeq" id="NP_775105.1">
    <molecule id="Q149N8-4"/>
    <property type="nucleotide sequence ID" value="NM_173082.4"/>
</dbReference>
<dbReference type="RefSeq" id="XP_006715504.1">
    <property type="nucleotide sequence ID" value="XM_006715441.3"/>
</dbReference>
<dbReference type="PDB" id="2M85">
    <property type="method" value="NMR"/>
    <property type="chains" value="A=652-716"/>
</dbReference>
<dbReference type="PDB" id="4QN1">
    <property type="method" value="X-ray"/>
    <property type="resolution" value="2.48 A"/>
    <property type="chains" value="A=1000-1418"/>
</dbReference>
<dbReference type="PDBsum" id="2M85"/>
<dbReference type="PDBsum" id="4QN1"/>
<dbReference type="SMR" id="Q149N8"/>
<dbReference type="BioGRID" id="129208">
    <property type="interactions" value="99"/>
</dbReference>
<dbReference type="DIP" id="DIP-46277N"/>
<dbReference type="FunCoup" id="Q149N8">
    <property type="interactions" value="3128"/>
</dbReference>
<dbReference type="IntAct" id="Q149N8">
    <property type="interactions" value="35"/>
</dbReference>
<dbReference type="MINT" id="Q149N8"/>
<dbReference type="STRING" id="9606.ENSP00000275233"/>
<dbReference type="GlyGen" id="Q149N8">
    <property type="glycosylation" value="1 site, 1 O-linked glycan (1 site)"/>
</dbReference>
<dbReference type="iPTMnet" id="Q149N8"/>
<dbReference type="PhosphoSitePlus" id="Q149N8"/>
<dbReference type="BioMuta" id="SHPRH"/>
<dbReference type="DMDM" id="146325723"/>
<dbReference type="jPOST" id="Q149N8"/>
<dbReference type="MassIVE" id="Q149N8"/>
<dbReference type="PaxDb" id="9606-ENSP00000356475"/>
<dbReference type="PeptideAtlas" id="Q149N8"/>
<dbReference type="ProteomicsDB" id="60294">
    <molecule id="Q149N8-1"/>
</dbReference>
<dbReference type="ProteomicsDB" id="60295">
    <molecule id="Q149N8-2"/>
</dbReference>
<dbReference type="ProteomicsDB" id="60296">
    <molecule id="Q149N8-4"/>
</dbReference>
<dbReference type="ProteomicsDB" id="60297">
    <molecule id="Q149N8-5"/>
</dbReference>
<dbReference type="Pumba" id="Q149N8"/>
<dbReference type="Antibodypedia" id="33225">
    <property type="antibodies" value="309 antibodies from 25 providers"/>
</dbReference>
<dbReference type="DNASU" id="257218"/>
<dbReference type="Ensembl" id="ENST00000275233.12">
    <molecule id="Q149N8-1"/>
    <property type="protein sequence ID" value="ENSP00000275233.7"/>
    <property type="gene ID" value="ENSG00000146414.17"/>
</dbReference>
<dbReference type="Ensembl" id="ENST00000367505.6">
    <molecule id="Q149N8-1"/>
    <property type="protein sequence ID" value="ENSP00000356475.2"/>
    <property type="gene ID" value="ENSG00000146414.17"/>
</dbReference>
<dbReference type="Ensembl" id="ENST00000438092.6">
    <molecule id="Q149N8-4"/>
    <property type="protein sequence ID" value="ENSP00000412797.2"/>
    <property type="gene ID" value="ENSG00000146414.17"/>
</dbReference>
<dbReference type="Ensembl" id="ENST00000519632.5">
    <molecule id="Q149N8-2"/>
    <property type="protein sequence ID" value="ENSP00000430528.1"/>
    <property type="gene ID" value="ENSG00000146414.17"/>
</dbReference>
<dbReference type="GeneID" id="257218"/>
<dbReference type="KEGG" id="hsa:257218"/>
<dbReference type="MANE-Select" id="ENST00000275233.12">
    <property type="protein sequence ID" value="ENSP00000275233.7"/>
    <property type="RefSeq nucleotide sequence ID" value="NM_001042683.3"/>
    <property type="RefSeq protein sequence ID" value="NP_001036148.2"/>
</dbReference>
<dbReference type="UCSC" id="uc003qle.4">
    <molecule id="Q149N8-1"/>
    <property type="organism name" value="human"/>
</dbReference>
<dbReference type="AGR" id="HGNC:19336"/>
<dbReference type="CTD" id="257218"/>
<dbReference type="DisGeNET" id="257218"/>
<dbReference type="GeneCards" id="SHPRH"/>
<dbReference type="HGNC" id="HGNC:19336">
    <property type="gene designation" value="SHPRH"/>
</dbReference>
<dbReference type="HPA" id="ENSG00000146414">
    <property type="expression patterns" value="Low tissue specificity"/>
</dbReference>
<dbReference type="MIM" id="608048">
    <property type="type" value="gene"/>
</dbReference>
<dbReference type="neXtProt" id="NX_Q149N8"/>
<dbReference type="OpenTargets" id="ENSG00000146414"/>
<dbReference type="PharmGKB" id="PA134880315"/>
<dbReference type="VEuPathDB" id="HostDB:ENSG00000146414"/>
<dbReference type="eggNOG" id="KOG0298">
    <property type="taxonomic scope" value="Eukaryota"/>
</dbReference>
<dbReference type="GeneTree" id="ENSGT00730000111123"/>
<dbReference type="HOGENOM" id="CLU_001726_1_1_1"/>
<dbReference type="InParanoid" id="Q149N8"/>
<dbReference type="OrthoDB" id="423559at2759"/>
<dbReference type="PAN-GO" id="Q149N8">
    <property type="GO annotations" value="3 GO annotations based on evolutionary models"/>
</dbReference>
<dbReference type="PhylomeDB" id="Q149N8"/>
<dbReference type="TreeFam" id="TF324273"/>
<dbReference type="PathwayCommons" id="Q149N8"/>
<dbReference type="Reactome" id="R-HSA-8866654">
    <property type="pathway name" value="E3 ubiquitin ligases ubiquitinate target proteins"/>
</dbReference>
<dbReference type="SignaLink" id="Q149N8"/>
<dbReference type="SIGNOR" id="Q149N8"/>
<dbReference type="UniPathway" id="UPA00143"/>
<dbReference type="BioGRID-ORCS" id="257218">
    <property type="hits" value="14 hits in 1212 CRISPR screens"/>
</dbReference>
<dbReference type="ChiTaRS" id="SHPRH">
    <property type="organism name" value="human"/>
</dbReference>
<dbReference type="EvolutionaryTrace" id="Q149N8"/>
<dbReference type="GeneWiki" id="SHPRH"/>
<dbReference type="GenomeRNAi" id="257218"/>
<dbReference type="Pharos" id="Q149N8">
    <property type="development level" value="Tbio"/>
</dbReference>
<dbReference type="PRO" id="PR:Q149N8"/>
<dbReference type="Proteomes" id="UP000005640">
    <property type="component" value="Chromosome 6"/>
</dbReference>
<dbReference type="RNAct" id="Q149N8">
    <property type="molecule type" value="protein"/>
</dbReference>
<dbReference type="Bgee" id="ENSG00000146414">
    <property type="expression patterns" value="Expressed in calcaneal tendon and 181 other cell types or tissues"/>
</dbReference>
<dbReference type="ExpressionAtlas" id="Q149N8">
    <property type="expression patterns" value="baseline and differential"/>
</dbReference>
<dbReference type="GO" id="GO:0005654">
    <property type="term" value="C:nucleoplasm"/>
    <property type="evidence" value="ECO:0000304"/>
    <property type="project" value="Reactome"/>
</dbReference>
<dbReference type="GO" id="GO:0000786">
    <property type="term" value="C:nucleosome"/>
    <property type="evidence" value="ECO:0007669"/>
    <property type="project" value="InterPro"/>
</dbReference>
<dbReference type="GO" id="GO:0005524">
    <property type="term" value="F:ATP binding"/>
    <property type="evidence" value="ECO:0007669"/>
    <property type="project" value="UniProtKB-KW"/>
</dbReference>
<dbReference type="GO" id="GO:0003677">
    <property type="term" value="F:DNA binding"/>
    <property type="evidence" value="ECO:0007669"/>
    <property type="project" value="InterPro"/>
</dbReference>
<dbReference type="GO" id="GO:0004386">
    <property type="term" value="F:helicase activity"/>
    <property type="evidence" value="ECO:0007669"/>
    <property type="project" value="UniProtKB-KW"/>
</dbReference>
<dbReference type="GO" id="GO:0016787">
    <property type="term" value="F:hydrolase activity"/>
    <property type="evidence" value="ECO:0007669"/>
    <property type="project" value="UniProtKB-KW"/>
</dbReference>
<dbReference type="GO" id="GO:0061630">
    <property type="term" value="F:ubiquitin protein ligase activity"/>
    <property type="evidence" value="ECO:0000269"/>
    <property type="project" value="Reactome"/>
</dbReference>
<dbReference type="GO" id="GO:0031625">
    <property type="term" value="F:ubiquitin protein ligase binding"/>
    <property type="evidence" value="ECO:0000314"/>
    <property type="project" value="MGI"/>
</dbReference>
<dbReference type="GO" id="GO:0004842">
    <property type="term" value="F:ubiquitin-protein transferase activity"/>
    <property type="evidence" value="ECO:0000314"/>
    <property type="project" value="FlyBase"/>
</dbReference>
<dbReference type="GO" id="GO:0008270">
    <property type="term" value="F:zinc ion binding"/>
    <property type="evidence" value="ECO:0007669"/>
    <property type="project" value="UniProtKB-KW"/>
</dbReference>
<dbReference type="GO" id="GO:0006974">
    <property type="term" value="P:DNA damage response"/>
    <property type="evidence" value="ECO:0000314"/>
    <property type="project" value="MGI"/>
</dbReference>
<dbReference type="GO" id="GO:0006281">
    <property type="term" value="P:DNA repair"/>
    <property type="evidence" value="ECO:0007669"/>
    <property type="project" value="UniProtKB-KW"/>
</dbReference>
<dbReference type="GO" id="GO:0006334">
    <property type="term" value="P:nucleosome assembly"/>
    <property type="evidence" value="ECO:0007669"/>
    <property type="project" value="InterPro"/>
</dbReference>
<dbReference type="GO" id="GO:0000209">
    <property type="term" value="P:protein polyubiquitination"/>
    <property type="evidence" value="ECO:0000314"/>
    <property type="project" value="FlyBase"/>
</dbReference>
<dbReference type="GO" id="GO:0016567">
    <property type="term" value="P:protein ubiquitination"/>
    <property type="evidence" value="ECO:0000304"/>
    <property type="project" value="Reactome"/>
</dbReference>
<dbReference type="CDD" id="cd18070">
    <property type="entry name" value="DEXQc_SHPRH"/>
    <property type="match status" value="1"/>
</dbReference>
<dbReference type="CDD" id="cd00073">
    <property type="entry name" value="H15"/>
    <property type="match status" value="1"/>
</dbReference>
<dbReference type="CDD" id="cd15547">
    <property type="entry name" value="PHD_SHPRH"/>
    <property type="match status" value="1"/>
</dbReference>
<dbReference type="CDD" id="cd16569">
    <property type="entry name" value="RING-HC_SHPRH-like"/>
    <property type="match status" value="1"/>
</dbReference>
<dbReference type="CDD" id="cd18793">
    <property type="entry name" value="SF2_C_SNF"/>
    <property type="match status" value="1"/>
</dbReference>
<dbReference type="FunFam" id="1.10.10.10:FF:000242">
    <property type="entry name" value="E3 ubiquitin-protein ligase SHPRH isoform X1"/>
    <property type="match status" value="1"/>
</dbReference>
<dbReference type="FunFam" id="3.30.40.10:FF:000162">
    <property type="entry name" value="E3 ubiquitin-protein ligase SHPRH isoform X1"/>
    <property type="match status" value="1"/>
</dbReference>
<dbReference type="FunFam" id="3.30.40.10:FF:000170">
    <property type="entry name" value="E3 ubiquitin-protein ligase SHPRH isoform X1"/>
    <property type="match status" value="1"/>
</dbReference>
<dbReference type="FunFam" id="3.40.50.300:FF:000786">
    <property type="entry name" value="E3 ubiquitin-protein ligase SHPRH isoform X1"/>
    <property type="match status" value="1"/>
</dbReference>
<dbReference type="FunFam" id="3.40.50.10810:FF:000013">
    <property type="entry name" value="E3 ubiquitin-protein ligase SHPRH isoform X2"/>
    <property type="match status" value="1"/>
</dbReference>
<dbReference type="Gene3D" id="3.40.50.300">
    <property type="entry name" value="P-loop containing nucleotide triphosphate hydrolases"/>
    <property type="match status" value="1"/>
</dbReference>
<dbReference type="Gene3D" id="3.40.50.10810">
    <property type="entry name" value="Tandem AAA-ATPase domain"/>
    <property type="match status" value="2"/>
</dbReference>
<dbReference type="Gene3D" id="1.10.10.10">
    <property type="entry name" value="Winged helix-like DNA-binding domain superfamily/Winged helix DNA-binding domain"/>
    <property type="match status" value="1"/>
</dbReference>
<dbReference type="Gene3D" id="3.30.40.10">
    <property type="entry name" value="Zinc/RING finger domain, C3HC4 (zinc finger)"/>
    <property type="match status" value="2"/>
</dbReference>
<dbReference type="InterPro" id="IPR052583">
    <property type="entry name" value="ATP-helicase/E3_Ub-Ligase"/>
</dbReference>
<dbReference type="InterPro" id="IPR014001">
    <property type="entry name" value="Helicase_ATP-bd"/>
</dbReference>
<dbReference type="InterPro" id="IPR001650">
    <property type="entry name" value="Helicase_C-like"/>
</dbReference>
<dbReference type="InterPro" id="IPR005818">
    <property type="entry name" value="Histone_H1/H5_H15"/>
</dbReference>
<dbReference type="InterPro" id="IPR027417">
    <property type="entry name" value="P-loop_NTPase"/>
</dbReference>
<dbReference type="InterPro" id="IPR048686">
    <property type="entry name" value="SHPRH_helical_1st"/>
</dbReference>
<dbReference type="InterPro" id="IPR048695">
    <property type="entry name" value="SHPRH_helical_2nd"/>
</dbReference>
<dbReference type="InterPro" id="IPR038718">
    <property type="entry name" value="SNF2-like_sf"/>
</dbReference>
<dbReference type="InterPro" id="IPR049730">
    <property type="entry name" value="SNF2/RAD54-like_C"/>
</dbReference>
<dbReference type="InterPro" id="IPR000330">
    <property type="entry name" value="SNF2_N"/>
</dbReference>
<dbReference type="InterPro" id="IPR036388">
    <property type="entry name" value="WH-like_DNA-bd_sf"/>
</dbReference>
<dbReference type="InterPro" id="IPR036390">
    <property type="entry name" value="WH_DNA-bd_sf"/>
</dbReference>
<dbReference type="InterPro" id="IPR019786">
    <property type="entry name" value="Zinc_finger_PHD-type_CS"/>
</dbReference>
<dbReference type="InterPro" id="IPR027370">
    <property type="entry name" value="Znf-RING_euk"/>
</dbReference>
<dbReference type="InterPro" id="IPR011011">
    <property type="entry name" value="Znf_FYVE_PHD"/>
</dbReference>
<dbReference type="InterPro" id="IPR001965">
    <property type="entry name" value="Znf_PHD"/>
</dbReference>
<dbReference type="InterPro" id="IPR001841">
    <property type="entry name" value="Znf_RING"/>
</dbReference>
<dbReference type="InterPro" id="IPR013083">
    <property type="entry name" value="Znf_RING/FYVE/PHD"/>
</dbReference>
<dbReference type="InterPro" id="IPR017907">
    <property type="entry name" value="Znf_RING_CS"/>
</dbReference>
<dbReference type="PANTHER" id="PTHR45865:SF1">
    <property type="entry name" value="E3 UBIQUITIN-PROTEIN LIGASE SHPRH"/>
    <property type="match status" value="1"/>
</dbReference>
<dbReference type="PANTHER" id="PTHR45865">
    <property type="entry name" value="E3 UBIQUITIN-PROTEIN LIGASE SHPRH FAMILY MEMBER"/>
    <property type="match status" value="1"/>
</dbReference>
<dbReference type="Pfam" id="PF00271">
    <property type="entry name" value="Helicase_C"/>
    <property type="match status" value="1"/>
</dbReference>
<dbReference type="Pfam" id="PF00538">
    <property type="entry name" value="Linker_histone"/>
    <property type="match status" value="1"/>
</dbReference>
<dbReference type="Pfam" id="PF21325">
    <property type="entry name" value="SHPRH_helical-1st"/>
    <property type="match status" value="1"/>
</dbReference>
<dbReference type="Pfam" id="PF21324">
    <property type="entry name" value="SHPRH_helical-2nd"/>
    <property type="match status" value="1"/>
</dbReference>
<dbReference type="Pfam" id="PF00176">
    <property type="entry name" value="SNF2-rel_dom"/>
    <property type="match status" value="1"/>
</dbReference>
<dbReference type="Pfam" id="PF13445">
    <property type="entry name" value="zf-RING_UBOX"/>
    <property type="match status" value="1"/>
</dbReference>
<dbReference type="SMART" id="SM00487">
    <property type="entry name" value="DEXDc"/>
    <property type="match status" value="1"/>
</dbReference>
<dbReference type="SMART" id="SM00526">
    <property type="entry name" value="H15"/>
    <property type="match status" value="1"/>
</dbReference>
<dbReference type="SMART" id="SM00490">
    <property type="entry name" value="HELICc"/>
    <property type="match status" value="1"/>
</dbReference>
<dbReference type="SMART" id="SM00249">
    <property type="entry name" value="PHD"/>
    <property type="match status" value="1"/>
</dbReference>
<dbReference type="SMART" id="SM00184">
    <property type="entry name" value="RING"/>
    <property type="match status" value="1"/>
</dbReference>
<dbReference type="SUPFAM" id="SSF57903">
    <property type="entry name" value="FYVE/PHD zinc finger"/>
    <property type="match status" value="1"/>
</dbReference>
<dbReference type="SUPFAM" id="SSF52540">
    <property type="entry name" value="P-loop containing nucleoside triphosphate hydrolases"/>
    <property type="match status" value="3"/>
</dbReference>
<dbReference type="SUPFAM" id="SSF57850">
    <property type="entry name" value="RING/U-box"/>
    <property type="match status" value="1"/>
</dbReference>
<dbReference type="SUPFAM" id="SSF46785">
    <property type="entry name" value="Winged helix' DNA-binding domain"/>
    <property type="match status" value="1"/>
</dbReference>
<dbReference type="PROSITE" id="PS51504">
    <property type="entry name" value="H15"/>
    <property type="match status" value="1"/>
</dbReference>
<dbReference type="PROSITE" id="PS51192">
    <property type="entry name" value="HELICASE_ATP_BIND_1"/>
    <property type="match status" value="1"/>
</dbReference>
<dbReference type="PROSITE" id="PS51194">
    <property type="entry name" value="HELICASE_CTER"/>
    <property type="match status" value="1"/>
</dbReference>
<dbReference type="PROSITE" id="PS01359">
    <property type="entry name" value="ZF_PHD_1"/>
    <property type="match status" value="1"/>
</dbReference>
<dbReference type="PROSITE" id="PS00518">
    <property type="entry name" value="ZF_RING_1"/>
    <property type="match status" value="1"/>
</dbReference>
<dbReference type="PROSITE" id="PS50089">
    <property type="entry name" value="ZF_RING_2"/>
    <property type="match status" value="1"/>
</dbReference>
<evidence type="ECO:0000250" key="1">
    <source>
        <dbReference type="UniProtKB" id="Q7TPQ3"/>
    </source>
</evidence>
<evidence type="ECO:0000255" key="2">
    <source>
        <dbReference type="PROSITE-ProRule" id="PRU00175"/>
    </source>
</evidence>
<evidence type="ECO:0000255" key="3">
    <source>
        <dbReference type="PROSITE-ProRule" id="PRU00541"/>
    </source>
</evidence>
<evidence type="ECO:0000255" key="4">
    <source>
        <dbReference type="PROSITE-ProRule" id="PRU00542"/>
    </source>
</evidence>
<evidence type="ECO:0000255" key="5">
    <source>
        <dbReference type="PROSITE-ProRule" id="PRU00837"/>
    </source>
</evidence>
<evidence type="ECO:0000256" key="6">
    <source>
        <dbReference type="SAM" id="MobiDB-lite"/>
    </source>
</evidence>
<evidence type="ECO:0000269" key="7">
    <source>
    </source>
</evidence>
<evidence type="ECO:0000269" key="8">
    <source>
    </source>
</evidence>
<evidence type="ECO:0000269" key="9">
    <source>
    </source>
</evidence>
<evidence type="ECO:0000269" key="10">
    <source>
    </source>
</evidence>
<evidence type="ECO:0000269" key="11">
    <source>
    </source>
</evidence>
<evidence type="ECO:0000269" key="12">
    <source>
    </source>
</evidence>
<evidence type="ECO:0000303" key="13">
    <source>
    </source>
</evidence>
<evidence type="ECO:0000303" key="14">
    <source ref="2"/>
</evidence>
<evidence type="ECO:0000303" key="15">
    <source ref="7"/>
</evidence>
<evidence type="ECO:0000305" key="16"/>
<evidence type="ECO:0007744" key="17">
    <source>
    </source>
</evidence>
<evidence type="ECO:0007829" key="18">
    <source>
        <dbReference type="PDB" id="2M85"/>
    </source>
</evidence>
<evidence type="ECO:0007829" key="19">
    <source>
        <dbReference type="PDB" id="4QN1"/>
    </source>
</evidence>
<organism>
    <name type="scientific">Homo sapiens</name>
    <name type="common">Human</name>
    <dbReference type="NCBI Taxonomy" id="9606"/>
    <lineage>
        <taxon>Eukaryota</taxon>
        <taxon>Metazoa</taxon>
        <taxon>Chordata</taxon>
        <taxon>Craniata</taxon>
        <taxon>Vertebrata</taxon>
        <taxon>Euteleostomi</taxon>
        <taxon>Mammalia</taxon>
        <taxon>Eutheria</taxon>
        <taxon>Euarchontoglires</taxon>
        <taxon>Primates</taxon>
        <taxon>Haplorrhini</taxon>
        <taxon>Catarrhini</taxon>
        <taxon>Hominidae</taxon>
        <taxon>Homo</taxon>
    </lineage>
</organism>
<comment type="function">
    <text evidence="8 9 10">E3 ubiquitin-protein ligase involved in DNA repair. Upon genotoxic stress, accepts ubiquitin from the UBE2N-UBE2V2 E2 complex and transfers it to 'Lys-164' of PCNA which had been monoubiquitinated by UBE2A/B-RAD18, promoting the formation of non-canonical poly-ubiquitin chains linked through 'Lys-63'.</text>
</comment>
<comment type="catalytic activity">
    <reaction>
        <text>S-ubiquitinyl-[E2 ubiquitin-conjugating enzyme]-L-cysteine + [acceptor protein]-L-lysine = [E2 ubiquitin-conjugating enzyme]-L-cysteine + N(6)-ubiquitinyl-[acceptor protein]-L-lysine.</text>
        <dbReference type="EC" id="2.3.2.27"/>
    </reaction>
</comment>
<comment type="pathway">
    <text>Protein modification; protein ubiquitination.</text>
</comment>
<comment type="subunit">
    <text evidence="8 9 10">Homodimer. Interacts with HLTF, PCNA, UBE2N and RAD18.</text>
</comment>
<comment type="interaction">
    <interactant intactId="EBI-714105">
        <id>Q149N8</id>
    </interactant>
    <interactant intactId="EBI-10193358">
        <id>Q96GS4</id>
        <label>BORCS6</label>
    </interactant>
    <organismsDiffer>false</organismsDiffer>
    <experiments>3</experiments>
</comment>
<comment type="interaction">
    <interactant intactId="EBI-714105">
        <id>Q149N8</id>
    </interactant>
    <interactant intactId="EBI-2949647">
        <id>Q8WWZ3</id>
        <label>EDARADD</label>
    </interactant>
    <organismsDiffer>false</organismsDiffer>
    <experiments>3</experiments>
</comment>
<comment type="interaction">
    <interactant intactId="EBI-15612386">
        <id>Q149N8-1</id>
    </interactant>
    <interactant intactId="EBI-1052908">
        <id>P61088</id>
        <label>UBE2N</label>
    </interactant>
    <organismsDiffer>false</organismsDiffer>
    <experiments>2</experiments>
</comment>
<comment type="alternative products">
    <event type="alternative splicing"/>
    <isoform>
        <id>Q149N8-1</id>
        <name>1</name>
        <sequence type="displayed"/>
    </isoform>
    <isoform>
        <id>Q149N8-2</id>
        <name>2</name>
        <sequence type="described" ref="VSP_024753 VSP_024757 VSP_024758"/>
    </isoform>
    <isoform>
        <id>Q149N8-4</id>
        <name>3</name>
        <sequence type="described" ref="VSP_024756 VSP_024759 VSP_024762 VSP_024763"/>
    </isoform>
    <isoform>
        <id>Q149N8-5</id>
        <name>4</name>
        <sequence type="described" ref="VSP_024760 VSP_024761"/>
    </isoform>
</comment>
<comment type="tissue specificity">
    <text evidence="7">Broadly expressed.</text>
</comment>
<comment type="domain">
    <text>The RING finger mediates E3 ubiquitin ligase activity.</text>
</comment>
<comment type="miscellaneous">
    <molecule>Isoform 2</molecule>
    <text evidence="16">May be produced at very low levels due to a premature stop codon in the mRNA, leading to nonsense-mediated mRNA decay.</text>
</comment>
<comment type="miscellaneous">
    <molecule>Isoform 4</molecule>
    <text evidence="16">May be produced at very low levels due to a premature stop codon in the mRNA, leading to nonsense-mediated mRNA decay.</text>
</comment>
<comment type="similarity">
    <text evidence="16">Belongs to the SNF2/RAD54 helicase family.</text>
</comment>
<comment type="sequence caution" evidence="16">
    <conflict type="miscellaneous discrepancy">
        <sequence resource="EMBL-CDS" id="AAI13090"/>
    </conflict>
    <text>Aberrant splicing.</text>
</comment>
<comment type="sequence caution" evidence="16">
    <conflict type="miscellaneous discrepancy">
        <sequence resource="EMBL-CDS" id="AAI17686"/>
    </conflict>
    <text>Aberrant splicing.</text>
</comment>
<comment type="sequence caution" evidence="16">
    <conflict type="erroneous initiation">
        <sequence resource="EMBL-CDS" id="BAC04459"/>
    </conflict>
</comment>
<comment type="sequence caution" evidence="16">
    <conflict type="erroneous translation">
        <sequence resource="EMBL-CDS" id="BAC23119"/>
    </conflict>
    <text>Wrong choice of frame.</text>
</comment>
<comment type="sequence caution" evidence="16">
    <conflict type="frameshift">
        <sequence resource="EMBL-CDS" id="CAH18145"/>
    </conflict>
</comment>
<protein>
    <recommendedName>
        <fullName>E3 ubiquitin-protein ligase SHPRH</fullName>
        <ecNumber>2.3.2.27</ecNumber>
        <ecNumber>3.6.4.-</ecNumber>
    </recommendedName>
    <alternativeName>
        <fullName evidence="16">RING-type E3 ubiquitin transferase SHPRH</fullName>
    </alternativeName>
    <alternativeName>
        <fullName>SNF2, histone-linker, PHD and RING finger domain-containing helicase</fullName>
    </alternativeName>
</protein>
<sequence>MSSRRKRAPPVRVDEEKRQQLHWNMHEDRRNEPIIISDDDEQPCPGSDTSSAHYIILSDSLKEEVAHRDKKRCSKVVSFSKPIEKEETVGIFSPLSVKLNIVISPYHFDNSWKAFLGELTLQLLPAQSLIENFSERSITLMSSESSNQFLIYVHSKGEDVEKQKKEPMSICDKGILVESSFSGEMLEDLGWLQKKRRIKLYQKPEGNHIIKVGIYLLEAGLAKLDFLSDANSRMKKFNQLMKKVMEKLHNSIIPDVLEEDEDDPESEPEGQDIDELYHFVKQTHQQETQSIQVDVQHPALIPVLRPYQREAVNWMLQQECFRSSPATESALHFLWREIVTSEGLKLYYNPYTGCIIREYPNSGPQLLGGILADEMGLGKTVEVLALILTHTRQDVKQDALTLPEGKVVNYFIPSHYFGGKLKKTEIQNIEFEPKEKVQCPPTRVMILTAVKEMNGKKGVSILSIYKYVSSIYRYDVQRNRSLLKRMLKCLIFEGLVKQIKGHGFSGTFTLGKNYKEEDICDKTKKQAVGSPRKIQKETRKSGNKDTDSEYLPSDTSDDDDDPYYYYYKSRRNRSKLRKKLVPSTKKGKSQPFINPDSQGHCPATSDSGITDVAMSKSTCISEFNQEHETEDCAESLNHADSDVPPSNTMSPFNTSDYRFECICGELDQIDRKPRVQCLKCHLWQHAKCVNYDEKNLKIKPFYCPHCLVAMEPVSTRATLIISPSSICHQWVDEINRHVRSSSLRVLVYQGVKKDGFLQPHFLAEQDIVIITYDVLRSELNYVDIPHSNSEDGRRLRNQKRYMAIPSPLVAVEWWRICLDEAQMVECPTVKAAEMAQRLSGINRWCISGTPVQRGLEDLFGLVVFLGIEPYCVKHWWVRLLYRPYCKKNPQHLYSFIAKILWRSAKKDVIDQIQIPPQTEEIHWLHFSPVERHFYHRQHEVCCQDVVVKLRKISDWALKLSSLDRRTVTSILYPLLRLRQACCHPQAVRGEFLPLQKSTMTMEELLTSLQKKCGTECEEAHRQLVCALNGLAGIHIIKGEYALAAELYREVLRSSEEHKGKLKTDSLQRLHATHNLMELLIARHPGIPPTLRDGRLEEEAKQLREHYMSKCNTEVAEAQQALYPVQQTIHELQRKIHSNSPWWLNVIHRAIEFTIDEELVQRVRNEITSNYKQQTGKLSMSEKFRDCRGLQFLLTTQMEELNKCQKLVREAVKNLEGPPSRNVIESATVCHLRPARLPLNCCVFCKADELFTEYESKLFSNTVKGQTAIFEEMIEDEEGLVDDRAPTTTRGLWAISETERSMKAILSFAKSHRFDVEFVDEGSTSMDLFEAWKKEYKLLHEYWMALRNRVSAVDELAMATERLRVRDPREPKPNPPVLHIIEPHEVEQNRIKLLNDKAVATSQLQKKLGQLLYLTNLEKSQDKTSGGVNPEPCPICARQLGKQWAVLTCGHCFCNECISIIIEQYSVGSHRSSIKCAICRQTTSHKEISYVFTSEKANQEEDIPVKGSHSTKVEAVVRTLMKIQLRDPGAKALVFSTWQDVLDIISKALTDNNMEFAQISRVKTFQENLSAFKRDPQINILLLPLHTGSNGLTIIEATHVLLVEPILNPAHELQAIGRVHRIGQTKPTIVHRFLIKATIEERMQAMLKTAERSHTNSSAKHSEASVLTVADLADLFTKETEELE</sequence>
<reference key="1">
    <citation type="journal article" date="2003" name="Genomics">
        <title>Cloning and characterization of a novel gene, SHPRH, encoding a conserved putative protein with SNF2/helicase and PHD-finger domains from the 6q24 region.</title>
        <authorList>
            <person name="Sood R."/>
            <person name="Makalowska I."/>
            <person name="Galdzicki M."/>
            <person name="Hu P."/>
            <person name="Eddings E."/>
            <person name="Robbins C.M."/>
            <person name="Moses T."/>
            <person name="Namkoong J."/>
            <person name="Chen S."/>
            <person name="Trent J.M."/>
        </authorList>
    </citation>
    <scope>NUCLEOTIDE SEQUENCE [MRNA] (ISOFORM 1)</scope>
    <scope>TISSUE SPECIFICITY</scope>
    <scope>VARIANTS ARG-438; PHE-460 AND TYR-1028</scope>
</reference>
<reference key="2">
    <citation type="submission" date="2002-10" db="EMBL/GenBank/DDBJ databases">
        <authorList>
            <person name="Chen S."/>
            <person name="Yu L."/>
            <person name="Guo J.H."/>
        </authorList>
    </citation>
    <scope>NUCLEOTIDE SEQUENCE [LARGE SCALE MRNA] (ISOFORM 3)</scope>
    <source>
        <tissue>Brain</tissue>
    </source>
</reference>
<reference key="3">
    <citation type="journal article" date="2007" name="BMC Genomics">
        <title>The full-ORF clone resource of the German cDNA consortium.</title>
        <authorList>
            <person name="Bechtel S."/>
            <person name="Rosenfelder H."/>
            <person name="Duda A."/>
            <person name="Schmidt C.P."/>
            <person name="Ernst U."/>
            <person name="Wellenreuther R."/>
            <person name="Mehrle A."/>
            <person name="Schuster C."/>
            <person name="Bahr A."/>
            <person name="Bloecker H."/>
            <person name="Heubner D."/>
            <person name="Hoerlein A."/>
            <person name="Michel G."/>
            <person name="Wedler H."/>
            <person name="Koehrer K."/>
            <person name="Ottenwaelder B."/>
            <person name="Poustka A."/>
            <person name="Wiemann S."/>
            <person name="Schupp I."/>
        </authorList>
    </citation>
    <scope>NUCLEOTIDE SEQUENCE [LARGE SCALE MRNA] (ISOFORM 2)</scope>
    <source>
        <tissue>Salivary gland</tissue>
    </source>
</reference>
<reference key="4">
    <citation type="journal article" date="2003" name="Nature">
        <title>The DNA sequence and analysis of human chromosome 6.</title>
        <authorList>
            <person name="Mungall A.J."/>
            <person name="Palmer S.A."/>
            <person name="Sims S.K."/>
            <person name="Edwards C.A."/>
            <person name="Ashurst J.L."/>
            <person name="Wilming L."/>
            <person name="Jones M.C."/>
            <person name="Horton R."/>
            <person name="Hunt S.E."/>
            <person name="Scott C.E."/>
            <person name="Gilbert J.G.R."/>
            <person name="Clamp M.E."/>
            <person name="Bethel G."/>
            <person name="Milne S."/>
            <person name="Ainscough R."/>
            <person name="Almeida J.P."/>
            <person name="Ambrose K.D."/>
            <person name="Andrews T.D."/>
            <person name="Ashwell R.I.S."/>
            <person name="Babbage A.K."/>
            <person name="Bagguley C.L."/>
            <person name="Bailey J."/>
            <person name="Banerjee R."/>
            <person name="Barker D.J."/>
            <person name="Barlow K.F."/>
            <person name="Bates K."/>
            <person name="Beare D.M."/>
            <person name="Beasley H."/>
            <person name="Beasley O."/>
            <person name="Bird C.P."/>
            <person name="Blakey S.E."/>
            <person name="Bray-Allen S."/>
            <person name="Brook J."/>
            <person name="Brown A.J."/>
            <person name="Brown J.Y."/>
            <person name="Burford D.C."/>
            <person name="Burrill W."/>
            <person name="Burton J."/>
            <person name="Carder C."/>
            <person name="Carter N.P."/>
            <person name="Chapman J.C."/>
            <person name="Clark S.Y."/>
            <person name="Clark G."/>
            <person name="Clee C.M."/>
            <person name="Clegg S."/>
            <person name="Cobley V."/>
            <person name="Collier R.E."/>
            <person name="Collins J.E."/>
            <person name="Colman L.K."/>
            <person name="Corby N.R."/>
            <person name="Coville G.J."/>
            <person name="Culley K.M."/>
            <person name="Dhami P."/>
            <person name="Davies J."/>
            <person name="Dunn M."/>
            <person name="Earthrowl M.E."/>
            <person name="Ellington A.E."/>
            <person name="Evans K.A."/>
            <person name="Faulkner L."/>
            <person name="Francis M.D."/>
            <person name="Frankish A."/>
            <person name="Frankland J."/>
            <person name="French L."/>
            <person name="Garner P."/>
            <person name="Garnett J."/>
            <person name="Ghori M.J."/>
            <person name="Gilby L.M."/>
            <person name="Gillson C.J."/>
            <person name="Glithero R.J."/>
            <person name="Grafham D.V."/>
            <person name="Grant M."/>
            <person name="Gribble S."/>
            <person name="Griffiths C."/>
            <person name="Griffiths M.N.D."/>
            <person name="Hall R."/>
            <person name="Halls K.S."/>
            <person name="Hammond S."/>
            <person name="Harley J.L."/>
            <person name="Hart E.A."/>
            <person name="Heath P.D."/>
            <person name="Heathcott R."/>
            <person name="Holmes S.J."/>
            <person name="Howden P.J."/>
            <person name="Howe K.L."/>
            <person name="Howell G.R."/>
            <person name="Huckle E."/>
            <person name="Humphray S.J."/>
            <person name="Humphries M.D."/>
            <person name="Hunt A.R."/>
            <person name="Johnson C.M."/>
            <person name="Joy A.A."/>
            <person name="Kay M."/>
            <person name="Keenan S.J."/>
            <person name="Kimberley A.M."/>
            <person name="King A."/>
            <person name="Laird G.K."/>
            <person name="Langford C."/>
            <person name="Lawlor S."/>
            <person name="Leongamornlert D.A."/>
            <person name="Leversha M."/>
            <person name="Lloyd C.R."/>
            <person name="Lloyd D.M."/>
            <person name="Loveland J.E."/>
            <person name="Lovell J."/>
            <person name="Martin S."/>
            <person name="Mashreghi-Mohammadi M."/>
            <person name="Maslen G.L."/>
            <person name="Matthews L."/>
            <person name="McCann O.T."/>
            <person name="McLaren S.J."/>
            <person name="McLay K."/>
            <person name="McMurray A."/>
            <person name="Moore M.J.F."/>
            <person name="Mullikin J.C."/>
            <person name="Niblett D."/>
            <person name="Nickerson T."/>
            <person name="Novik K.L."/>
            <person name="Oliver K."/>
            <person name="Overton-Larty E.K."/>
            <person name="Parker A."/>
            <person name="Patel R."/>
            <person name="Pearce A.V."/>
            <person name="Peck A.I."/>
            <person name="Phillimore B.J.C.T."/>
            <person name="Phillips S."/>
            <person name="Plumb R.W."/>
            <person name="Porter K.M."/>
            <person name="Ramsey Y."/>
            <person name="Ranby S.A."/>
            <person name="Rice C.M."/>
            <person name="Ross M.T."/>
            <person name="Searle S.M."/>
            <person name="Sehra H.K."/>
            <person name="Sheridan E."/>
            <person name="Skuce C.D."/>
            <person name="Smith S."/>
            <person name="Smith M."/>
            <person name="Spraggon L."/>
            <person name="Squares S.L."/>
            <person name="Steward C.A."/>
            <person name="Sycamore N."/>
            <person name="Tamlyn-Hall G."/>
            <person name="Tester J."/>
            <person name="Theaker A.J."/>
            <person name="Thomas D.W."/>
            <person name="Thorpe A."/>
            <person name="Tracey A."/>
            <person name="Tromans A."/>
            <person name="Tubby B."/>
            <person name="Wall M."/>
            <person name="Wallis J.M."/>
            <person name="West A.P."/>
            <person name="White S.S."/>
            <person name="Whitehead S.L."/>
            <person name="Whittaker H."/>
            <person name="Wild A."/>
            <person name="Willey D.J."/>
            <person name="Wilmer T.E."/>
            <person name="Wood J.M."/>
            <person name="Wray P.W."/>
            <person name="Wyatt J.C."/>
            <person name="Young L."/>
            <person name="Younger R.M."/>
            <person name="Bentley D.R."/>
            <person name="Coulson A."/>
            <person name="Durbin R.M."/>
            <person name="Hubbard T."/>
            <person name="Sulston J.E."/>
            <person name="Dunham I."/>
            <person name="Rogers J."/>
            <person name="Beck S."/>
        </authorList>
    </citation>
    <scope>NUCLEOTIDE SEQUENCE [LARGE SCALE GENOMIC DNA]</scope>
</reference>
<reference key="5">
    <citation type="journal article" date="2004" name="Genome Res.">
        <title>The status, quality, and expansion of the NIH full-length cDNA project: the Mammalian Gene Collection (MGC).</title>
        <authorList>
            <consortium name="The MGC Project Team"/>
        </authorList>
    </citation>
    <scope>NUCLEOTIDE SEQUENCE [LARGE SCALE MRNA] (ISOFORM 1)</scope>
</reference>
<reference key="6">
    <citation type="journal article" date="2004" name="Nat. Genet.">
        <title>Complete sequencing and characterization of 21,243 full-length human cDNAs.</title>
        <authorList>
            <person name="Ota T."/>
            <person name="Suzuki Y."/>
            <person name="Nishikawa T."/>
            <person name="Otsuki T."/>
            <person name="Sugiyama T."/>
            <person name="Irie R."/>
            <person name="Wakamatsu A."/>
            <person name="Hayashi K."/>
            <person name="Sato H."/>
            <person name="Nagai K."/>
            <person name="Kimura K."/>
            <person name="Makita H."/>
            <person name="Sekine M."/>
            <person name="Obayashi M."/>
            <person name="Nishi T."/>
            <person name="Shibahara T."/>
            <person name="Tanaka T."/>
            <person name="Ishii S."/>
            <person name="Yamamoto J."/>
            <person name="Saito K."/>
            <person name="Kawai Y."/>
            <person name="Isono Y."/>
            <person name="Nakamura Y."/>
            <person name="Nagahari K."/>
            <person name="Murakami K."/>
            <person name="Yasuda T."/>
            <person name="Iwayanagi T."/>
            <person name="Wagatsuma M."/>
            <person name="Shiratori A."/>
            <person name="Sudo H."/>
            <person name="Hosoiri T."/>
            <person name="Kaku Y."/>
            <person name="Kodaira H."/>
            <person name="Kondo H."/>
            <person name="Sugawara M."/>
            <person name="Takahashi M."/>
            <person name="Kanda K."/>
            <person name="Yokoi T."/>
            <person name="Furuya T."/>
            <person name="Kikkawa E."/>
            <person name="Omura Y."/>
            <person name="Abe K."/>
            <person name="Kamihara K."/>
            <person name="Katsuta N."/>
            <person name="Sato K."/>
            <person name="Tanikawa M."/>
            <person name="Yamazaki M."/>
            <person name="Ninomiya K."/>
            <person name="Ishibashi T."/>
            <person name="Yamashita H."/>
            <person name="Murakawa K."/>
            <person name="Fujimori K."/>
            <person name="Tanai H."/>
            <person name="Kimata M."/>
            <person name="Watanabe M."/>
            <person name="Hiraoka S."/>
            <person name="Chiba Y."/>
            <person name="Ishida S."/>
            <person name="Ono Y."/>
            <person name="Takiguchi S."/>
            <person name="Watanabe S."/>
            <person name="Yosida M."/>
            <person name="Hotuta T."/>
            <person name="Kusano J."/>
            <person name="Kanehori K."/>
            <person name="Takahashi-Fujii A."/>
            <person name="Hara H."/>
            <person name="Tanase T.-O."/>
            <person name="Nomura Y."/>
            <person name="Togiya S."/>
            <person name="Komai F."/>
            <person name="Hara R."/>
            <person name="Takeuchi K."/>
            <person name="Arita M."/>
            <person name="Imose N."/>
            <person name="Musashino K."/>
            <person name="Yuuki H."/>
            <person name="Oshima A."/>
            <person name="Sasaki N."/>
            <person name="Aotsuka S."/>
            <person name="Yoshikawa Y."/>
            <person name="Matsunawa H."/>
            <person name="Ichihara T."/>
            <person name="Shiohata N."/>
            <person name="Sano S."/>
            <person name="Moriya S."/>
            <person name="Momiyama H."/>
            <person name="Satoh N."/>
            <person name="Takami S."/>
            <person name="Terashima Y."/>
            <person name="Suzuki O."/>
            <person name="Nakagawa S."/>
            <person name="Senoh A."/>
            <person name="Mizoguchi H."/>
            <person name="Goto Y."/>
            <person name="Shimizu F."/>
            <person name="Wakebe H."/>
            <person name="Hishigaki H."/>
            <person name="Watanabe T."/>
            <person name="Sugiyama A."/>
            <person name="Takemoto M."/>
            <person name="Kawakami B."/>
            <person name="Yamazaki M."/>
            <person name="Watanabe K."/>
            <person name="Kumagai A."/>
            <person name="Itakura S."/>
            <person name="Fukuzumi Y."/>
            <person name="Fujimori Y."/>
            <person name="Komiyama M."/>
            <person name="Tashiro H."/>
            <person name="Tanigami A."/>
            <person name="Fujiwara T."/>
            <person name="Ono T."/>
            <person name="Yamada K."/>
            <person name="Fujii Y."/>
            <person name="Ozaki K."/>
            <person name="Hirao M."/>
            <person name="Ohmori Y."/>
            <person name="Kawabata A."/>
            <person name="Hikiji T."/>
            <person name="Kobatake N."/>
            <person name="Inagaki H."/>
            <person name="Ikema Y."/>
            <person name="Okamoto S."/>
            <person name="Okitani R."/>
            <person name="Kawakami T."/>
            <person name="Noguchi S."/>
            <person name="Itoh T."/>
            <person name="Shigeta K."/>
            <person name="Senba T."/>
            <person name="Matsumura K."/>
            <person name="Nakajima Y."/>
            <person name="Mizuno T."/>
            <person name="Morinaga M."/>
            <person name="Sasaki M."/>
            <person name="Togashi T."/>
            <person name="Oyama M."/>
            <person name="Hata H."/>
            <person name="Watanabe M."/>
            <person name="Komatsu T."/>
            <person name="Mizushima-Sugano J."/>
            <person name="Satoh T."/>
            <person name="Shirai Y."/>
            <person name="Takahashi Y."/>
            <person name="Nakagawa K."/>
            <person name="Okumura K."/>
            <person name="Nagase T."/>
            <person name="Nomura N."/>
            <person name="Kikuchi H."/>
            <person name="Masuho Y."/>
            <person name="Yamashita R."/>
            <person name="Nakai K."/>
            <person name="Yada T."/>
            <person name="Nakamura Y."/>
            <person name="Ohara O."/>
            <person name="Isogai T."/>
            <person name="Sugano S."/>
        </authorList>
    </citation>
    <scope>NUCLEOTIDE SEQUENCE [LARGE SCALE MRNA] OF 1-584 AND 1532-1683 (ISOFORM 1)</scope>
    <source>
        <tissue>Corpus callosum</tissue>
    </source>
</reference>
<reference key="7">
    <citation type="submission" date="2002-11" db="EMBL/GenBank/DDBJ databases">
        <title>The nucleotide sequence of a long cDNA clone isolated from human.</title>
        <authorList>
            <person name="Nagase T."/>
            <person name="Kikuno R."/>
            <person name="Ohara O."/>
        </authorList>
    </citation>
    <scope>NUCLEOTIDE SEQUENCE [LARGE SCALE MRNA] OF 23-1683 (ISOFORM 4)</scope>
    <source>
        <tissue>Brain</tissue>
    </source>
</reference>
<reference key="8">
    <citation type="journal article" date="2006" name="J. Cell Biol.">
        <title>Human SHPRH suppresses genomic instability through proliferating cell nuclear antigen polyubiquitination.</title>
        <authorList>
            <person name="Motegi A."/>
            <person name="Sood R."/>
            <person name="Moinova H."/>
            <person name="Markowitz S.D."/>
            <person name="Liu P.P."/>
            <person name="Myung K."/>
        </authorList>
    </citation>
    <scope>FUNCTION</scope>
    <scope>HOMODIMERIZATION</scope>
    <scope>INTERACTION WITH PCNA; UBE2N AND RAD18</scope>
    <scope>MUTAGENESIS OF CYS-1432</scope>
</reference>
<reference key="9">
    <citation type="journal article" date="2006" name="Proc. Natl. Acad. Sci. U.S.A.">
        <title>Human SHPRH is a ubiquitin ligase for Mms2-Ubc13-dependent polyubiquitylation of proliferating cell nuclear antigen.</title>
        <authorList>
            <person name="Unk I."/>
            <person name="Hajdu I."/>
            <person name="Fatyol K."/>
            <person name="Szakal B."/>
            <person name="Blastyak A."/>
            <person name="Bermudez V."/>
            <person name="Hurwitz J."/>
            <person name="Prakash L."/>
            <person name="Prakash S."/>
            <person name="Haracska L."/>
        </authorList>
    </citation>
    <scope>FUNCTION</scope>
    <scope>INTERACTION WITH UBE2N AND RAD18</scope>
</reference>
<reference key="10">
    <citation type="journal article" date="2008" name="Proc. Natl. Acad. Sci. U.S.A.">
        <title>Polyubiquitination of proliferating cell nuclear antigen by HLTF and SHPRH prevents genomic instability from stalled replication forks.</title>
        <authorList>
            <person name="Motegi A."/>
            <person name="Liaw H.-J."/>
            <person name="Lee K.-Y."/>
            <person name="Roest H.P."/>
            <person name="Maas A."/>
            <person name="Wu X."/>
            <person name="Moinova H."/>
            <person name="Markowitz S.D."/>
            <person name="Ding H."/>
            <person name="Hoeijmakers J.H.J."/>
            <person name="Myung K."/>
        </authorList>
    </citation>
    <scope>FUNCTION</scope>
    <scope>INTERACTION WITH HLTF</scope>
</reference>
<reference key="11">
    <citation type="journal article" date="2010" name="Sci. Signal.">
        <title>Quantitative phosphoproteomics reveals widespread full phosphorylation site occupancy during mitosis.</title>
        <authorList>
            <person name="Olsen J.V."/>
            <person name="Vermeulen M."/>
            <person name="Santamaria A."/>
            <person name="Kumar C."/>
            <person name="Miller M.L."/>
            <person name="Jensen L.J."/>
            <person name="Gnad F."/>
            <person name="Cox J."/>
            <person name="Jensen T.S."/>
            <person name="Nigg E.A."/>
            <person name="Brunak S."/>
            <person name="Mann M."/>
        </authorList>
    </citation>
    <scope>IDENTIFICATION BY MASS SPECTROMETRY [LARGE SCALE ANALYSIS]</scope>
    <source>
        <tissue>Cervix carcinoma</tissue>
    </source>
</reference>
<reference key="12">
    <citation type="journal article" date="2011" name="BMC Syst. Biol.">
        <title>Initial characterization of the human central proteome.</title>
        <authorList>
            <person name="Burkard T.R."/>
            <person name="Planyavsky M."/>
            <person name="Kaupe I."/>
            <person name="Breitwieser F.P."/>
            <person name="Buerckstuemmer T."/>
            <person name="Bennett K.L."/>
            <person name="Superti-Furga G."/>
            <person name="Colinge J."/>
        </authorList>
    </citation>
    <scope>IDENTIFICATION BY MASS SPECTROMETRY [LARGE SCALE ANALYSIS]</scope>
</reference>
<reference key="13">
    <citation type="journal article" date="2011" name="Sci. Signal.">
        <title>System-wide temporal characterization of the proteome and phosphoproteome of human embryonic stem cell differentiation.</title>
        <authorList>
            <person name="Rigbolt K.T."/>
            <person name="Prokhorova T.A."/>
            <person name="Akimov V."/>
            <person name="Henningsen J."/>
            <person name="Johansen P.T."/>
            <person name="Kratchmarova I."/>
            <person name="Kassem M."/>
            <person name="Mann M."/>
            <person name="Olsen J.V."/>
            <person name="Blagoev B."/>
        </authorList>
    </citation>
    <scope>PHOSPHORYLATION [LARGE SCALE ANALYSIS] AT SER-266</scope>
    <scope>IDENTIFICATION BY MASS SPECTROMETRY [LARGE SCALE ANALYSIS]</scope>
</reference>
<reference key="14">
    <citation type="journal article" date="2011" name="Nature">
        <title>Exome sequencing identifies frequent mutation of the SWI/SNF complex gene PBRM1 in renal carcinoma.</title>
        <authorList>
            <person name="Varela I."/>
            <person name="Tarpey P."/>
            <person name="Raine K."/>
            <person name="Huang D."/>
            <person name="Ong C.K."/>
            <person name="Stephens P."/>
            <person name="Davies H."/>
            <person name="Jones D."/>
            <person name="Lin M.L."/>
            <person name="Teague J."/>
            <person name="Bignell G."/>
            <person name="Butler A."/>
            <person name="Cho J."/>
            <person name="Dalgliesh G.L."/>
            <person name="Galappaththige D."/>
            <person name="Greenman C."/>
            <person name="Hardy C."/>
            <person name="Jia M."/>
            <person name="Latimer C."/>
            <person name="Lau K.W."/>
            <person name="Marshall J."/>
            <person name="McLaren S."/>
            <person name="Menzies A."/>
            <person name="Mudie L."/>
            <person name="Stebbings L."/>
            <person name="Largaespada D.A."/>
            <person name="Wessels L.F.A."/>
            <person name="Richard S."/>
            <person name="Kahnoski R.J."/>
            <person name="Anema J."/>
            <person name="Tuveson D.A."/>
            <person name="Perez-Mancera P.A."/>
            <person name="Mustonen V."/>
            <person name="Fischer A."/>
            <person name="Adams D.J."/>
            <person name="Rust A."/>
            <person name="Chan-On W."/>
            <person name="Subimerb C."/>
            <person name="Dykema K."/>
            <person name="Furge K."/>
            <person name="Campbell P.J."/>
            <person name="Teh B.T."/>
            <person name="Stratton M.R."/>
            <person name="Futreal P.A."/>
        </authorList>
    </citation>
    <scope>VARIANT ASP-1222</scope>
</reference>
<reference key="15">
    <citation type="journal article" date="2024" name="Hum. Genet.">
        <title>Exome variant prioritization in a large cohort of hearing-impaired individuals indicates IKZF2 to be associated with non-syndromic hearing loss and guides future research of unsolved cases.</title>
        <authorList>
            <consortium name="DOOFNL Consortium"/>
            <person name="Velde H.M."/>
            <person name="Vaseghi-Shanjani M."/>
            <person name="Smits J.J."/>
            <person name="Ramakrishnan G."/>
            <person name="Oostrik J."/>
            <person name="Wesdorp M."/>
            <person name="Astuti G."/>
            <person name="Yntema H.G."/>
            <person name="Hoefsloot L."/>
            <person name="Lanting C.P."/>
            <person name="Huynen M.A."/>
            <person name="Lehman A."/>
            <person name="Turvey S.E."/>
            <person name="Pennings R.J.E."/>
            <person name="Kremer H."/>
        </authorList>
    </citation>
    <scope>VARIANTS ALA-267 AND THR-1146</scope>
</reference>
<proteinExistence type="evidence at protein level"/>